<comment type="function">
    <text evidence="1">Catalyzes the condensation of carbamoyl phosphate and aspartate to form carbamoyl aspartate and inorganic phosphate, the committed step in the de novo pyrimidine nucleotide biosynthesis pathway.</text>
</comment>
<comment type="catalytic activity">
    <reaction evidence="1">
        <text>carbamoyl phosphate + L-aspartate = N-carbamoyl-L-aspartate + phosphate + H(+)</text>
        <dbReference type="Rhea" id="RHEA:20013"/>
        <dbReference type="ChEBI" id="CHEBI:15378"/>
        <dbReference type="ChEBI" id="CHEBI:29991"/>
        <dbReference type="ChEBI" id="CHEBI:32814"/>
        <dbReference type="ChEBI" id="CHEBI:43474"/>
        <dbReference type="ChEBI" id="CHEBI:58228"/>
        <dbReference type="EC" id="2.1.3.2"/>
    </reaction>
</comment>
<comment type="pathway">
    <text evidence="1">Pyrimidine metabolism; UMP biosynthesis via de novo pathway; (S)-dihydroorotate from bicarbonate: step 2/3.</text>
</comment>
<comment type="subunit">
    <text evidence="1">Heterododecamer (2C3:3R2) of six catalytic PyrB chains organized as two trimers (C3), and six regulatory PyrI chains organized as three dimers (R2).</text>
</comment>
<comment type="similarity">
    <text evidence="1">Belongs to the aspartate/ornithine carbamoyltransferase superfamily. ATCase family.</text>
</comment>
<protein>
    <recommendedName>
        <fullName evidence="1">Aspartate carbamoyltransferase catalytic subunit</fullName>
        <ecNumber evidence="1">2.1.3.2</ecNumber>
    </recommendedName>
    <alternativeName>
        <fullName evidence="1">Aspartate transcarbamylase</fullName>
        <shortName evidence="1">ATCase</shortName>
    </alternativeName>
</protein>
<sequence length="313" mass="33588">MIGRHKHCIALEDFSREEILEVIDLAASMKEVLQRPIKKVPSLRGKMVVNLFFEASTRTRSSFETAAKILSADALNWTSSSSSVTKGETLVDTARNLEAMRPDVLVIRHSAGGAPRLVAEHVGCSVVSAGDGAHEHPSQGLLDCFTLREKLGTLEGKTVAIVGDVSHSRVARSDLHAFPKLGAKVRLCGPPTMMPAGVERLGATVHTDLREAVDGADAVIMLRIQHERIGDPLIPGTREYSKVWGLNAKKAADWLKPSCVILHPGPINRGVELSPEVADGPRSVILDQVQNGVAVRMAILYLLAGGAGEEARA</sequence>
<name>PYRB_ANASK</name>
<organism>
    <name type="scientific">Anaeromyxobacter sp. (strain K)</name>
    <dbReference type="NCBI Taxonomy" id="447217"/>
    <lineage>
        <taxon>Bacteria</taxon>
        <taxon>Pseudomonadati</taxon>
        <taxon>Myxococcota</taxon>
        <taxon>Myxococcia</taxon>
        <taxon>Myxococcales</taxon>
        <taxon>Cystobacterineae</taxon>
        <taxon>Anaeromyxobacteraceae</taxon>
        <taxon>Anaeromyxobacter</taxon>
    </lineage>
</organism>
<feature type="chain" id="PRO_1000088735" description="Aspartate carbamoyltransferase catalytic subunit">
    <location>
        <begin position="1"/>
        <end position="313"/>
    </location>
</feature>
<feature type="binding site" evidence="1">
    <location>
        <position position="58"/>
    </location>
    <ligand>
        <name>carbamoyl phosphate</name>
        <dbReference type="ChEBI" id="CHEBI:58228"/>
    </ligand>
</feature>
<feature type="binding site" evidence="1">
    <location>
        <position position="59"/>
    </location>
    <ligand>
        <name>carbamoyl phosphate</name>
        <dbReference type="ChEBI" id="CHEBI:58228"/>
    </ligand>
</feature>
<feature type="binding site" evidence="1">
    <location>
        <position position="86"/>
    </location>
    <ligand>
        <name>L-aspartate</name>
        <dbReference type="ChEBI" id="CHEBI:29991"/>
    </ligand>
</feature>
<feature type="binding site" evidence="1">
    <location>
        <position position="108"/>
    </location>
    <ligand>
        <name>carbamoyl phosphate</name>
        <dbReference type="ChEBI" id="CHEBI:58228"/>
    </ligand>
</feature>
<feature type="binding site" evidence="1">
    <location>
        <position position="136"/>
    </location>
    <ligand>
        <name>carbamoyl phosphate</name>
        <dbReference type="ChEBI" id="CHEBI:58228"/>
    </ligand>
</feature>
<feature type="binding site" evidence="1">
    <location>
        <position position="139"/>
    </location>
    <ligand>
        <name>carbamoyl phosphate</name>
        <dbReference type="ChEBI" id="CHEBI:58228"/>
    </ligand>
</feature>
<feature type="binding site" evidence="1">
    <location>
        <position position="169"/>
    </location>
    <ligand>
        <name>L-aspartate</name>
        <dbReference type="ChEBI" id="CHEBI:29991"/>
    </ligand>
</feature>
<feature type="binding site" evidence="1">
    <location>
        <position position="223"/>
    </location>
    <ligand>
        <name>L-aspartate</name>
        <dbReference type="ChEBI" id="CHEBI:29991"/>
    </ligand>
</feature>
<feature type="binding site" evidence="1">
    <location>
        <position position="265"/>
    </location>
    <ligand>
        <name>carbamoyl phosphate</name>
        <dbReference type="ChEBI" id="CHEBI:58228"/>
    </ligand>
</feature>
<feature type="binding site" evidence="1">
    <location>
        <position position="266"/>
    </location>
    <ligand>
        <name>carbamoyl phosphate</name>
        <dbReference type="ChEBI" id="CHEBI:58228"/>
    </ligand>
</feature>
<evidence type="ECO:0000255" key="1">
    <source>
        <dbReference type="HAMAP-Rule" id="MF_00001"/>
    </source>
</evidence>
<gene>
    <name evidence="1" type="primary">pyrB</name>
    <name type="ordered locus">AnaeK_2242</name>
</gene>
<keyword id="KW-0665">Pyrimidine biosynthesis</keyword>
<keyword id="KW-0808">Transferase</keyword>
<accession>B4UDQ3</accession>
<dbReference type="EC" id="2.1.3.2" evidence="1"/>
<dbReference type="EMBL" id="CP001131">
    <property type="protein sequence ID" value="ACG73469.1"/>
    <property type="molecule type" value="Genomic_DNA"/>
</dbReference>
<dbReference type="RefSeq" id="WP_012526268.1">
    <property type="nucleotide sequence ID" value="NC_011145.1"/>
</dbReference>
<dbReference type="SMR" id="B4UDQ3"/>
<dbReference type="KEGG" id="ank:AnaeK_2242"/>
<dbReference type="HOGENOM" id="CLU_043846_2_0_7"/>
<dbReference type="OrthoDB" id="9774690at2"/>
<dbReference type="UniPathway" id="UPA00070">
    <property type="reaction ID" value="UER00116"/>
</dbReference>
<dbReference type="Proteomes" id="UP000001871">
    <property type="component" value="Chromosome"/>
</dbReference>
<dbReference type="GO" id="GO:0005829">
    <property type="term" value="C:cytosol"/>
    <property type="evidence" value="ECO:0007669"/>
    <property type="project" value="TreeGrafter"/>
</dbReference>
<dbReference type="GO" id="GO:0016597">
    <property type="term" value="F:amino acid binding"/>
    <property type="evidence" value="ECO:0007669"/>
    <property type="project" value="InterPro"/>
</dbReference>
<dbReference type="GO" id="GO:0004070">
    <property type="term" value="F:aspartate carbamoyltransferase activity"/>
    <property type="evidence" value="ECO:0007669"/>
    <property type="project" value="UniProtKB-UniRule"/>
</dbReference>
<dbReference type="GO" id="GO:0006207">
    <property type="term" value="P:'de novo' pyrimidine nucleobase biosynthetic process"/>
    <property type="evidence" value="ECO:0007669"/>
    <property type="project" value="InterPro"/>
</dbReference>
<dbReference type="GO" id="GO:0044205">
    <property type="term" value="P:'de novo' UMP biosynthetic process"/>
    <property type="evidence" value="ECO:0007669"/>
    <property type="project" value="UniProtKB-UniRule"/>
</dbReference>
<dbReference type="GO" id="GO:0006520">
    <property type="term" value="P:amino acid metabolic process"/>
    <property type="evidence" value="ECO:0007669"/>
    <property type="project" value="InterPro"/>
</dbReference>
<dbReference type="Gene3D" id="3.40.50.1370">
    <property type="entry name" value="Aspartate/ornithine carbamoyltransferase"/>
    <property type="match status" value="2"/>
</dbReference>
<dbReference type="HAMAP" id="MF_00001">
    <property type="entry name" value="Asp_carb_tr"/>
    <property type="match status" value="1"/>
</dbReference>
<dbReference type="InterPro" id="IPR006132">
    <property type="entry name" value="Asp/Orn_carbamoyltranf_P-bd"/>
</dbReference>
<dbReference type="InterPro" id="IPR006130">
    <property type="entry name" value="Asp/Orn_carbamoylTrfase"/>
</dbReference>
<dbReference type="InterPro" id="IPR036901">
    <property type="entry name" value="Asp/Orn_carbamoylTrfase_sf"/>
</dbReference>
<dbReference type="InterPro" id="IPR002082">
    <property type="entry name" value="Asp_carbamoyltransf"/>
</dbReference>
<dbReference type="InterPro" id="IPR006131">
    <property type="entry name" value="Asp_carbamoyltransf_Asp/Orn-bd"/>
</dbReference>
<dbReference type="NCBIfam" id="TIGR00670">
    <property type="entry name" value="asp_carb_tr"/>
    <property type="match status" value="1"/>
</dbReference>
<dbReference type="NCBIfam" id="NF002032">
    <property type="entry name" value="PRK00856.1"/>
    <property type="match status" value="1"/>
</dbReference>
<dbReference type="PANTHER" id="PTHR45753:SF6">
    <property type="entry name" value="ASPARTATE CARBAMOYLTRANSFERASE"/>
    <property type="match status" value="1"/>
</dbReference>
<dbReference type="PANTHER" id="PTHR45753">
    <property type="entry name" value="ORNITHINE CARBAMOYLTRANSFERASE, MITOCHONDRIAL"/>
    <property type="match status" value="1"/>
</dbReference>
<dbReference type="Pfam" id="PF00185">
    <property type="entry name" value="OTCace"/>
    <property type="match status" value="1"/>
</dbReference>
<dbReference type="Pfam" id="PF02729">
    <property type="entry name" value="OTCace_N"/>
    <property type="match status" value="1"/>
</dbReference>
<dbReference type="PRINTS" id="PR00100">
    <property type="entry name" value="AOTCASE"/>
</dbReference>
<dbReference type="PRINTS" id="PR00101">
    <property type="entry name" value="ATCASE"/>
</dbReference>
<dbReference type="SUPFAM" id="SSF53671">
    <property type="entry name" value="Aspartate/ornithine carbamoyltransferase"/>
    <property type="match status" value="1"/>
</dbReference>
<dbReference type="PROSITE" id="PS00097">
    <property type="entry name" value="CARBAMOYLTRANSFERASE"/>
    <property type="match status" value="1"/>
</dbReference>
<reference key="1">
    <citation type="submission" date="2008-08" db="EMBL/GenBank/DDBJ databases">
        <title>Complete sequence of Anaeromyxobacter sp. K.</title>
        <authorList>
            <consortium name="US DOE Joint Genome Institute"/>
            <person name="Lucas S."/>
            <person name="Copeland A."/>
            <person name="Lapidus A."/>
            <person name="Glavina del Rio T."/>
            <person name="Dalin E."/>
            <person name="Tice H."/>
            <person name="Bruce D."/>
            <person name="Goodwin L."/>
            <person name="Pitluck S."/>
            <person name="Saunders E."/>
            <person name="Brettin T."/>
            <person name="Detter J.C."/>
            <person name="Han C."/>
            <person name="Larimer F."/>
            <person name="Land M."/>
            <person name="Hauser L."/>
            <person name="Kyrpides N."/>
            <person name="Ovchinnikiva G."/>
            <person name="Beliaev A."/>
        </authorList>
    </citation>
    <scope>NUCLEOTIDE SEQUENCE [LARGE SCALE GENOMIC DNA]</scope>
    <source>
        <strain>K</strain>
    </source>
</reference>
<proteinExistence type="inferred from homology"/>